<evidence type="ECO:0000250" key="1"/>
<evidence type="ECO:0000250" key="2">
    <source>
        <dbReference type="UniProtKB" id="Q5U3V9"/>
    </source>
</evidence>
<evidence type="ECO:0000250" key="3">
    <source>
        <dbReference type="UniProtKB" id="Q96H20"/>
    </source>
</evidence>
<evidence type="ECO:0000255" key="4"/>
<evidence type="ECO:0000305" key="5"/>
<protein>
    <recommendedName>
        <fullName>Vacuolar-sorting protein SNF8</fullName>
    </recommendedName>
    <alternativeName>
        <fullName>ESCRT-II complex subunit VPS22</fullName>
    </alternativeName>
</protein>
<sequence length="257" mass="28607">MHRRGVGAGAIAKKKLAEAKYKERGTVLAEDQLLQMSKQLEMFKTNLEEFASKHKQEIRKNPQFRVQFQDMCATIGVDPLASGKGFWSEMLGVGDFYYELGVQIIEVCLALKHHNGGLITLAELHQHVLKGRGKLAQDVSQDDIIRAIKKLKVLGNGFGIIPVGGSYLVQSVPAELNMDHTVVLQLAEKKGFVTVNEIKSSLNWETERAKHVLEHLLKEGLAWIDSQAQGEAQYWLPALFTALYAQQINMDENGGPS</sequence>
<organism>
    <name type="scientific">Xenopus tropicalis</name>
    <name type="common">Western clawed frog</name>
    <name type="synonym">Silurana tropicalis</name>
    <dbReference type="NCBI Taxonomy" id="8364"/>
    <lineage>
        <taxon>Eukaryota</taxon>
        <taxon>Metazoa</taxon>
        <taxon>Chordata</taxon>
        <taxon>Craniata</taxon>
        <taxon>Vertebrata</taxon>
        <taxon>Euteleostomi</taxon>
        <taxon>Amphibia</taxon>
        <taxon>Batrachia</taxon>
        <taxon>Anura</taxon>
        <taxon>Pipoidea</taxon>
        <taxon>Pipidae</taxon>
        <taxon>Xenopodinae</taxon>
        <taxon>Xenopus</taxon>
        <taxon>Silurana</taxon>
    </lineage>
</organism>
<reference key="1">
    <citation type="submission" date="2004-11" db="EMBL/GenBank/DDBJ databases">
        <authorList>
            <consortium name="NIH - Xenopus Gene Collection (XGC) project"/>
        </authorList>
    </citation>
    <scope>NUCLEOTIDE SEQUENCE [LARGE SCALE MRNA]</scope>
    <source>
        <tissue>Embryo</tissue>
    </source>
</reference>
<keyword id="KW-0175">Coiled coil</keyword>
<keyword id="KW-0963">Cytoplasm</keyword>
<keyword id="KW-0653">Protein transport</keyword>
<keyword id="KW-1185">Reference proteome</keyword>
<keyword id="KW-0813">Transport</keyword>
<dbReference type="EMBL" id="BC086504">
    <property type="protein sequence ID" value="AAH86504.1"/>
    <property type="molecule type" value="mRNA"/>
</dbReference>
<dbReference type="RefSeq" id="NP_001011185.1">
    <property type="nucleotide sequence ID" value="NM_001011185.2"/>
</dbReference>
<dbReference type="SMR" id="Q5RJU0"/>
<dbReference type="FunCoup" id="Q5RJU0">
    <property type="interactions" value="2526"/>
</dbReference>
<dbReference type="STRING" id="8364.ENSXETP00000050886"/>
<dbReference type="DNASU" id="496607"/>
<dbReference type="GeneID" id="496607"/>
<dbReference type="KEGG" id="xtr:496607"/>
<dbReference type="AGR" id="Xenbase:XB-GENE-961618"/>
<dbReference type="CTD" id="11267"/>
<dbReference type="Xenbase" id="XB-GENE-961618">
    <property type="gene designation" value="snf8"/>
</dbReference>
<dbReference type="InParanoid" id="Q5RJU0"/>
<dbReference type="OMA" id="QIVEVCM"/>
<dbReference type="OrthoDB" id="283883at2759"/>
<dbReference type="Proteomes" id="UP000008143">
    <property type="component" value="Chromosome 10"/>
</dbReference>
<dbReference type="Bgee" id="ENSXETG00000022819">
    <property type="expression patterns" value="Expressed in egg cell and 13 other cell types or tissues"/>
</dbReference>
<dbReference type="GO" id="GO:0000814">
    <property type="term" value="C:ESCRT II complex"/>
    <property type="evidence" value="ECO:0007669"/>
    <property type="project" value="InterPro"/>
</dbReference>
<dbReference type="GO" id="GO:0030900">
    <property type="term" value="P:forebrain development"/>
    <property type="evidence" value="ECO:0007669"/>
    <property type="project" value="Ensembl"/>
</dbReference>
<dbReference type="GO" id="GO:0071985">
    <property type="term" value="P:multivesicular body sorting pathway"/>
    <property type="evidence" value="ECO:0007669"/>
    <property type="project" value="InterPro"/>
</dbReference>
<dbReference type="GO" id="GO:0061360">
    <property type="term" value="P:optic chiasma development"/>
    <property type="evidence" value="ECO:0007669"/>
    <property type="project" value="Ensembl"/>
</dbReference>
<dbReference type="GO" id="GO:0015031">
    <property type="term" value="P:protein transport"/>
    <property type="evidence" value="ECO:0007669"/>
    <property type="project" value="UniProtKB-KW"/>
</dbReference>
<dbReference type="FunFam" id="1.10.10.10:FF:000085">
    <property type="entry name" value="Vacuolar-sorting protein SNF8"/>
    <property type="match status" value="1"/>
</dbReference>
<dbReference type="FunFam" id="1.10.10.10:FF:000234">
    <property type="entry name" value="Vacuolar-sorting protein SNF8"/>
    <property type="match status" value="1"/>
</dbReference>
<dbReference type="Gene3D" id="6.10.140.180">
    <property type="match status" value="1"/>
</dbReference>
<dbReference type="Gene3D" id="1.10.10.10">
    <property type="entry name" value="Winged helix-like DNA-binding domain superfamily/Winged helix DNA-binding domain"/>
    <property type="match status" value="2"/>
</dbReference>
<dbReference type="InterPro" id="IPR016689">
    <property type="entry name" value="ESCRT-2_cplx_Snf8"/>
</dbReference>
<dbReference type="InterPro" id="IPR040608">
    <property type="entry name" value="Snf8/Vps36"/>
</dbReference>
<dbReference type="InterPro" id="IPR036388">
    <property type="entry name" value="WH-like_DNA-bd_sf"/>
</dbReference>
<dbReference type="InterPro" id="IPR036390">
    <property type="entry name" value="WH_DNA-bd_sf"/>
</dbReference>
<dbReference type="PANTHER" id="PTHR12806">
    <property type="entry name" value="EAP30 SUBUNIT OF ELL COMPLEX"/>
    <property type="match status" value="1"/>
</dbReference>
<dbReference type="PANTHER" id="PTHR12806:SF0">
    <property type="entry name" value="VACUOLAR-SORTING PROTEIN SNF8"/>
    <property type="match status" value="1"/>
</dbReference>
<dbReference type="Pfam" id="PF04157">
    <property type="entry name" value="EAP30"/>
    <property type="match status" value="1"/>
</dbReference>
<dbReference type="PIRSF" id="PIRSF017215">
    <property type="entry name" value="ESCRT2_Vps22"/>
    <property type="match status" value="1"/>
</dbReference>
<dbReference type="SUPFAM" id="SSF46785">
    <property type="entry name" value="Winged helix' DNA-binding domain"/>
    <property type="match status" value="2"/>
</dbReference>
<comment type="function">
    <text evidence="2 3">Component of the endosomal sorting complex required for transport II (ESCRT-II), which is required for multivesicular body (MVB) formation and sorting of endosomal cargo proteins into MVBs, and plays a role in autophagy. The MVB pathway mediates delivery of transmembrane proteins into the lumen of the lysosome for degradation. The ESCRT-II complex is probably involved in the recruitment of the ESCRT-III complex (By similarity).</text>
</comment>
<comment type="subunit">
    <text evidence="3">Component of the endosomal sorting complex required for transport II (ESCRT-II), composed of snf8, vps36 and vps25.</text>
</comment>
<comment type="subcellular location">
    <subcellularLocation>
        <location evidence="1">Cytoplasm</location>
    </subcellularLocation>
</comment>
<comment type="similarity">
    <text evidence="5">Belongs to the SNF8 family.</text>
</comment>
<accession>Q5RJU0</accession>
<name>SNF8_XENTR</name>
<feature type="chain" id="PRO_0000215213" description="Vacuolar-sorting protein SNF8">
    <location>
        <begin position="1"/>
        <end position="257"/>
    </location>
</feature>
<feature type="coiled-coil region" evidence="4">
    <location>
        <begin position="28"/>
        <end position="50"/>
    </location>
</feature>
<gene>
    <name type="primary">snf8</name>
</gene>
<proteinExistence type="evidence at transcript level"/>